<organism>
    <name type="scientific">Gallus gallus</name>
    <name type="common">Chicken</name>
    <dbReference type="NCBI Taxonomy" id="9031"/>
    <lineage>
        <taxon>Eukaryota</taxon>
        <taxon>Metazoa</taxon>
        <taxon>Chordata</taxon>
        <taxon>Craniata</taxon>
        <taxon>Vertebrata</taxon>
        <taxon>Euteleostomi</taxon>
        <taxon>Archelosauria</taxon>
        <taxon>Archosauria</taxon>
        <taxon>Dinosauria</taxon>
        <taxon>Saurischia</taxon>
        <taxon>Theropoda</taxon>
        <taxon>Coelurosauria</taxon>
        <taxon>Aves</taxon>
        <taxon>Neognathae</taxon>
        <taxon>Galloanserae</taxon>
        <taxon>Galliformes</taxon>
        <taxon>Phasianidae</taxon>
        <taxon>Phasianinae</taxon>
        <taxon>Gallus</taxon>
    </lineage>
</organism>
<accession>Q5ZJD3</accession>
<reference key="1">
    <citation type="journal article" date="2005" name="Genome Biol.">
        <title>Full-length cDNAs from chicken bursal lymphocytes to facilitate gene function analysis.</title>
        <authorList>
            <person name="Caldwell R.B."/>
            <person name="Kierzek A.M."/>
            <person name="Arakawa H."/>
            <person name="Bezzubov Y."/>
            <person name="Zaim J."/>
            <person name="Fiedler P."/>
            <person name="Kutter S."/>
            <person name="Blagodatski A."/>
            <person name="Kostovska D."/>
            <person name="Koter M."/>
            <person name="Plachy J."/>
            <person name="Carninci P."/>
            <person name="Hayashizaki Y."/>
            <person name="Buerstedde J.-M."/>
        </authorList>
    </citation>
    <scope>NUCLEOTIDE SEQUENCE [LARGE SCALE MRNA]</scope>
    <source>
        <strain>CB</strain>
        <tissue>Bursa of Fabricius</tissue>
    </source>
</reference>
<protein>
    <recommendedName>
        <fullName evidence="2">Large subunit GTPase 1 homolog</fullName>
        <ecNumber evidence="3">3.6.5.-</ecNumber>
    </recommendedName>
</protein>
<proteinExistence type="evidence at transcript level"/>
<sequence>MGKKRGTGLGRSLQRQRGSERRGASSWLHASEVVGESGPERRSAVEQSPLEEFLATAELAGTRFVAERLNIQFVSAQSRTGLLTAQEAQHVRQLHEENRQFLRIPRRPYWDRTTSSEDLKQAERESFLEWRRQLAHLEEEKKLILTPFERNLEFWRQLWRVIERSDIVVQIVDARNPLLFRCQDLESYVKEVSNDKENMILINKADLLSEEQRAAWAQFFEKEGVKVVFWSALAECRRLSGEVKELDADSVADDLSDSEEESSSQEEDVTAEDSAESTSTGSALQTENQCLLSDDDSSDEYEDCEDEEEDDWQTCSEDEGGDKVNAIAPKSMENRTDIVSMHHVVQEQNRNVKNFSHLVQRNELLEIFKTLHSGPRVKDGEVNVGLVGYPNVGKSSTINTILGDKKVSVSATPGRTKHFQTLYVEPGLCLCDCPGLVMPSFVSTKAEMICSGILPIDQMRDHVPPISLVCQHIPRNILEATYGINIIRPREDEDPDRKPTAEELLTAYGYMRGFMTAHGQPDQPRSARYVLKDYVSGKLLYCHPPPGIDPDGFQHQHERCPESRTVQASGPVKPKKNTKAKQIENVVDKSFFHQENVRALMKGVRATMGYRPGSGLVSVPAPSAGSVVGKPWKKHGNRNKKEKVRRITKHLEN</sequence>
<gene>
    <name evidence="3" type="primary">LSG1</name>
    <name type="ORF">RCJMB04_19c19</name>
</gene>
<dbReference type="EC" id="3.6.5.-" evidence="3"/>
<dbReference type="EMBL" id="AJ720501">
    <property type="protein sequence ID" value="CAG32160.1"/>
    <property type="molecule type" value="mRNA"/>
</dbReference>
<dbReference type="RefSeq" id="NP_001006549.1">
    <property type="nucleotide sequence ID" value="NM_001006549.1"/>
</dbReference>
<dbReference type="SMR" id="Q5ZJD3"/>
<dbReference type="FunCoup" id="Q5ZJD3">
    <property type="interactions" value="2609"/>
</dbReference>
<dbReference type="STRING" id="9031.ENSGALP00000039544"/>
<dbReference type="GlyGen" id="Q5ZJD3">
    <property type="glycosylation" value="1 site"/>
</dbReference>
<dbReference type="PaxDb" id="9031-ENSGALP00000039544"/>
<dbReference type="GeneID" id="424897"/>
<dbReference type="KEGG" id="gga:424897"/>
<dbReference type="CTD" id="55341"/>
<dbReference type="VEuPathDB" id="HostDB:geneid_424897"/>
<dbReference type="eggNOG" id="KOG1424">
    <property type="taxonomic scope" value="Eukaryota"/>
</dbReference>
<dbReference type="InParanoid" id="Q5ZJD3"/>
<dbReference type="OrthoDB" id="61815at2759"/>
<dbReference type="PhylomeDB" id="Q5ZJD3"/>
<dbReference type="PRO" id="PR:Q5ZJD3"/>
<dbReference type="Proteomes" id="UP000000539">
    <property type="component" value="Unassembled WGS sequence"/>
</dbReference>
<dbReference type="GO" id="GO:0015030">
    <property type="term" value="C:Cajal body"/>
    <property type="evidence" value="ECO:0000250"/>
    <property type="project" value="UniProtKB"/>
</dbReference>
<dbReference type="GO" id="GO:0005829">
    <property type="term" value="C:cytosol"/>
    <property type="evidence" value="ECO:0000318"/>
    <property type="project" value="GO_Central"/>
</dbReference>
<dbReference type="GO" id="GO:0005783">
    <property type="term" value="C:endoplasmic reticulum"/>
    <property type="evidence" value="ECO:0000250"/>
    <property type="project" value="UniProtKB"/>
</dbReference>
<dbReference type="GO" id="GO:0005525">
    <property type="term" value="F:GTP binding"/>
    <property type="evidence" value="ECO:0000250"/>
    <property type="project" value="UniProtKB"/>
</dbReference>
<dbReference type="GO" id="GO:0003924">
    <property type="term" value="F:GTPase activity"/>
    <property type="evidence" value="ECO:0000318"/>
    <property type="project" value="GO_Central"/>
</dbReference>
<dbReference type="GO" id="GO:0051168">
    <property type="term" value="P:nuclear export"/>
    <property type="evidence" value="ECO:0000250"/>
    <property type="project" value="UniProtKB"/>
</dbReference>
<dbReference type="GO" id="GO:0015031">
    <property type="term" value="P:protein transport"/>
    <property type="evidence" value="ECO:0007669"/>
    <property type="project" value="UniProtKB-KW"/>
</dbReference>
<dbReference type="GO" id="GO:0000054">
    <property type="term" value="P:ribosomal subunit export from nucleus"/>
    <property type="evidence" value="ECO:0000318"/>
    <property type="project" value="GO_Central"/>
</dbReference>
<dbReference type="CDD" id="cd01857">
    <property type="entry name" value="HSR1_MMR1"/>
    <property type="match status" value="1"/>
</dbReference>
<dbReference type="FunFam" id="3.40.50.300:FF:002533">
    <property type="entry name" value="Large subunit GTPase 1"/>
    <property type="match status" value="1"/>
</dbReference>
<dbReference type="FunFam" id="3.40.50.300:FF:003226">
    <property type="entry name" value="Large subunit GTPase 1 homolog"/>
    <property type="match status" value="1"/>
</dbReference>
<dbReference type="Gene3D" id="3.40.50.300">
    <property type="entry name" value="P-loop containing nucleotide triphosphate hydrolases"/>
    <property type="match status" value="2"/>
</dbReference>
<dbReference type="InterPro" id="IPR030378">
    <property type="entry name" value="G_CP_dom"/>
</dbReference>
<dbReference type="InterPro" id="IPR043358">
    <property type="entry name" value="GNL1-like"/>
</dbReference>
<dbReference type="InterPro" id="IPR006073">
    <property type="entry name" value="GTP-bd"/>
</dbReference>
<dbReference type="InterPro" id="IPR027417">
    <property type="entry name" value="P-loop_NTPase"/>
</dbReference>
<dbReference type="PANTHER" id="PTHR45709:SF2">
    <property type="entry name" value="LARGE SUBUNIT GTPASE 1 HOMOLOG"/>
    <property type="match status" value="1"/>
</dbReference>
<dbReference type="PANTHER" id="PTHR45709">
    <property type="entry name" value="LARGE SUBUNIT GTPASE 1 HOMOLOG-RELATED"/>
    <property type="match status" value="1"/>
</dbReference>
<dbReference type="Pfam" id="PF01926">
    <property type="entry name" value="MMR_HSR1"/>
    <property type="match status" value="1"/>
</dbReference>
<dbReference type="PRINTS" id="PR00326">
    <property type="entry name" value="GTP1OBG"/>
</dbReference>
<dbReference type="SUPFAM" id="SSF52540">
    <property type="entry name" value="P-loop containing nucleoside triphosphate hydrolases"/>
    <property type="match status" value="1"/>
</dbReference>
<dbReference type="PROSITE" id="PS51721">
    <property type="entry name" value="G_CP"/>
    <property type="match status" value="1"/>
</dbReference>
<keyword id="KW-0963">Cytoplasm</keyword>
<keyword id="KW-0256">Endoplasmic reticulum</keyword>
<keyword id="KW-0342">GTP-binding</keyword>
<keyword id="KW-0378">Hydrolase</keyword>
<keyword id="KW-0547">Nucleotide-binding</keyword>
<keyword id="KW-0539">Nucleus</keyword>
<keyword id="KW-0653">Protein transport</keyword>
<keyword id="KW-1185">Reference proteome</keyword>
<keyword id="KW-0813">Transport</keyword>
<name>LSG1_CHICK</name>
<feature type="chain" id="PRO_0000324557" description="Large subunit GTPase 1 homolog">
    <location>
        <begin position="1"/>
        <end position="653"/>
    </location>
</feature>
<feature type="domain" description="CP-type G" evidence="5">
    <location>
        <begin position="155"/>
        <end position="439"/>
    </location>
</feature>
<feature type="region of interest" description="Disordered" evidence="6">
    <location>
        <begin position="1"/>
        <end position="47"/>
    </location>
</feature>
<feature type="region of interest" description="Disordered" evidence="6">
    <location>
        <begin position="248"/>
        <end position="323"/>
    </location>
</feature>
<feature type="region of interest" description="Disordered" evidence="6">
    <location>
        <begin position="621"/>
        <end position="653"/>
    </location>
</feature>
<feature type="compositionally biased region" description="Acidic residues" evidence="6">
    <location>
        <begin position="248"/>
        <end position="275"/>
    </location>
</feature>
<feature type="compositionally biased region" description="Polar residues" evidence="6">
    <location>
        <begin position="276"/>
        <end position="291"/>
    </location>
</feature>
<feature type="compositionally biased region" description="Acidic residues" evidence="6">
    <location>
        <begin position="293"/>
        <end position="320"/>
    </location>
</feature>
<feature type="compositionally biased region" description="Basic residues" evidence="6">
    <location>
        <begin position="631"/>
        <end position="653"/>
    </location>
</feature>
<feature type="binding site" evidence="4">
    <location>
        <begin position="203"/>
        <end position="206"/>
    </location>
    <ligand>
        <name>GTP</name>
        <dbReference type="ChEBI" id="CHEBI:37565"/>
    </ligand>
</feature>
<feature type="binding site" evidence="4">
    <location>
        <begin position="388"/>
        <end position="395"/>
    </location>
    <ligand>
        <name>GTP</name>
        <dbReference type="ChEBI" id="CHEBI:37565"/>
    </ligand>
</feature>
<feature type="binding site" evidence="4">
    <location>
        <begin position="432"/>
        <end position="435"/>
    </location>
    <ligand>
        <name>GTP</name>
        <dbReference type="ChEBI" id="CHEBI:37565"/>
    </ligand>
</feature>
<comment type="function">
    <text evidence="1">GTPase required for the XPO1/CRM1-mediated nuclear export of the 60S ribosomal subunit. Probably acts by mediating the release of NMD3 from the 60S ribosomal subunit after export into the cytoplasm (By similarity).</text>
</comment>
<comment type="function">
    <text evidence="3">Functions as a GTPase. May act by mediating the release of NMD3 from the 60S ribosomal subunit after export into the cytoplasm during the 60S ribosomal subunit maturation.</text>
</comment>
<comment type="catalytic activity">
    <reaction evidence="3">
        <text>GTP + H2O = GDP + phosphate + H(+)</text>
        <dbReference type="Rhea" id="RHEA:19669"/>
        <dbReference type="ChEBI" id="CHEBI:15377"/>
        <dbReference type="ChEBI" id="CHEBI:15378"/>
        <dbReference type="ChEBI" id="CHEBI:37565"/>
        <dbReference type="ChEBI" id="CHEBI:43474"/>
        <dbReference type="ChEBI" id="CHEBI:58189"/>
    </reaction>
</comment>
<comment type="subcellular location">
    <subcellularLocation>
        <location evidence="3">Cytoplasm</location>
    </subcellularLocation>
    <subcellularLocation>
        <location evidence="3">Endoplasmic reticulum</location>
    </subcellularLocation>
    <subcellularLocation>
        <location evidence="3">Nucleus</location>
        <location evidence="3">Cajal body</location>
    </subcellularLocation>
    <text evidence="3">between the cytosol and Cajal bodies via a XPO1/CRM1-dependent export mechanism.</text>
</comment>
<comment type="domain">
    <text evidence="3">In contrast to other GTP-binding proteins, this family is characterized by a circular permutation of the GTPase motifs described by a G4-G1-G3 pattern.</text>
</comment>
<comment type="similarity">
    <text evidence="5">Belongs to the TRAFAC class YlqF/YawG GTPase family. LSG1 subfamily.</text>
</comment>
<evidence type="ECO:0000250" key="1"/>
<evidence type="ECO:0000250" key="2">
    <source>
        <dbReference type="UniProtKB" id="P53145"/>
    </source>
</evidence>
<evidence type="ECO:0000250" key="3">
    <source>
        <dbReference type="UniProtKB" id="Q9H089"/>
    </source>
</evidence>
<evidence type="ECO:0000255" key="4"/>
<evidence type="ECO:0000255" key="5">
    <source>
        <dbReference type="PROSITE-ProRule" id="PRU01058"/>
    </source>
</evidence>
<evidence type="ECO:0000256" key="6">
    <source>
        <dbReference type="SAM" id="MobiDB-lite"/>
    </source>
</evidence>